<accession>Q94AR8</accession>
<accession>Q9T0L4</accession>
<name>LEUC_ARATH</name>
<reference key="1">
    <citation type="journal article" date="2009" name="Science">
        <title>A genetic defect caused by a triplet repeat expansion in Arabidopsis thaliana.</title>
        <authorList>
            <person name="Sureshkumar S."/>
            <person name="Todesco M."/>
            <person name="Schneeberger K."/>
            <person name="Harilal R."/>
            <person name="Balasubramanian S."/>
            <person name="Weigel D."/>
        </authorList>
    </citation>
    <scope>NUCLEOTIDE SEQUENCE [GENOMIC DNA]</scope>
    <scope>FUNCTION</scope>
    <source>
        <strain>cv. Bur-0</strain>
        <strain>cv. Columbia</strain>
        <strain>cv. Pf-0</strain>
    </source>
</reference>
<reference key="2">
    <citation type="journal article" date="1999" name="Nature">
        <title>Sequence and analysis of chromosome 4 of the plant Arabidopsis thaliana.</title>
        <authorList>
            <person name="Mayer K.F.X."/>
            <person name="Schueller C."/>
            <person name="Wambutt R."/>
            <person name="Murphy G."/>
            <person name="Volckaert G."/>
            <person name="Pohl T."/>
            <person name="Duesterhoeft A."/>
            <person name="Stiekema W."/>
            <person name="Entian K.-D."/>
            <person name="Terryn N."/>
            <person name="Harris B."/>
            <person name="Ansorge W."/>
            <person name="Brandt P."/>
            <person name="Grivell L.A."/>
            <person name="Rieger M."/>
            <person name="Weichselgartner M."/>
            <person name="de Simone V."/>
            <person name="Obermaier B."/>
            <person name="Mache R."/>
            <person name="Mueller M."/>
            <person name="Kreis M."/>
            <person name="Delseny M."/>
            <person name="Puigdomenech P."/>
            <person name="Watson M."/>
            <person name="Schmidtheini T."/>
            <person name="Reichert B."/>
            <person name="Portetelle D."/>
            <person name="Perez-Alonso M."/>
            <person name="Boutry M."/>
            <person name="Bancroft I."/>
            <person name="Vos P."/>
            <person name="Hoheisel J."/>
            <person name="Zimmermann W."/>
            <person name="Wedler H."/>
            <person name="Ridley P."/>
            <person name="Langham S.-A."/>
            <person name="McCullagh B."/>
            <person name="Bilham L."/>
            <person name="Robben J."/>
            <person name="van der Schueren J."/>
            <person name="Grymonprez B."/>
            <person name="Chuang Y.-J."/>
            <person name="Vandenbussche F."/>
            <person name="Braeken M."/>
            <person name="Weltjens I."/>
            <person name="Voet M."/>
            <person name="Bastiaens I."/>
            <person name="Aert R."/>
            <person name="Defoor E."/>
            <person name="Weitzenegger T."/>
            <person name="Bothe G."/>
            <person name="Ramsperger U."/>
            <person name="Hilbert H."/>
            <person name="Braun M."/>
            <person name="Holzer E."/>
            <person name="Brandt A."/>
            <person name="Peters S."/>
            <person name="van Staveren M."/>
            <person name="Dirkse W."/>
            <person name="Mooijman P."/>
            <person name="Klein Lankhorst R."/>
            <person name="Rose M."/>
            <person name="Hauf J."/>
            <person name="Koetter P."/>
            <person name="Berneiser S."/>
            <person name="Hempel S."/>
            <person name="Feldpausch M."/>
            <person name="Lamberth S."/>
            <person name="Van den Daele H."/>
            <person name="De Keyser A."/>
            <person name="Buysshaert C."/>
            <person name="Gielen J."/>
            <person name="Villarroel R."/>
            <person name="De Clercq R."/>
            <person name="van Montagu M."/>
            <person name="Rogers J."/>
            <person name="Cronin A."/>
            <person name="Quail M.A."/>
            <person name="Bray-Allen S."/>
            <person name="Clark L."/>
            <person name="Doggett J."/>
            <person name="Hall S."/>
            <person name="Kay M."/>
            <person name="Lennard N."/>
            <person name="McLay K."/>
            <person name="Mayes R."/>
            <person name="Pettett A."/>
            <person name="Rajandream M.A."/>
            <person name="Lyne M."/>
            <person name="Benes V."/>
            <person name="Rechmann S."/>
            <person name="Borkova D."/>
            <person name="Bloecker H."/>
            <person name="Scharfe M."/>
            <person name="Grimm M."/>
            <person name="Loehnert T.-H."/>
            <person name="Dose S."/>
            <person name="de Haan M."/>
            <person name="Maarse A.C."/>
            <person name="Schaefer M."/>
            <person name="Mueller-Auer S."/>
            <person name="Gabel C."/>
            <person name="Fuchs M."/>
            <person name="Fartmann B."/>
            <person name="Granderath K."/>
            <person name="Dauner D."/>
            <person name="Herzl A."/>
            <person name="Neumann S."/>
            <person name="Argiriou A."/>
            <person name="Vitale D."/>
            <person name="Liguori R."/>
            <person name="Piravandi E."/>
            <person name="Massenet O."/>
            <person name="Quigley F."/>
            <person name="Clabauld G."/>
            <person name="Muendlein A."/>
            <person name="Felber R."/>
            <person name="Schnabl S."/>
            <person name="Hiller R."/>
            <person name="Schmidt W."/>
            <person name="Lecharny A."/>
            <person name="Aubourg S."/>
            <person name="Chefdor F."/>
            <person name="Cooke R."/>
            <person name="Berger C."/>
            <person name="Monfort A."/>
            <person name="Casacuberta E."/>
            <person name="Gibbons T."/>
            <person name="Weber N."/>
            <person name="Vandenbol M."/>
            <person name="Bargues M."/>
            <person name="Terol J."/>
            <person name="Torres A."/>
            <person name="Perez-Perez A."/>
            <person name="Purnelle B."/>
            <person name="Bent E."/>
            <person name="Johnson S."/>
            <person name="Tacon D."/>
            <person name="Jesse T."/>
            <person name="Heijnen L."/>
            <person name="Schwarz S."/>
            <person name="Scholler P."/>
            <person name="Heber S."/>
            <person name="Francs P."/>
            <person name="Bielke C."/>
            <person name="Frishman D."/>
            <person name="Haase D."/>
            <person name="Lemcke K."/>
            <person name="Mewes H.-W."/>
            <person name="Stocker S."/>
            <person name="Zaccaria P."/>
            <person name="Bevan M."/>
            <person name="Wilson R.K."/>
            <person name="de la Bastide M."/>
            <person name="Habermann K."/>
            <person name="Parnell L."/>
            <person name="Dedhia N."/>
            <person name="Gnoj L."/>
            <person name="Schutz K."/>
            <person name="Huang E."/>
            <person name="Spiegel L."/>
            <person name="Sekhon M."/>
            <person name="Murray J."/>
            <person name="Sheet P."/>
            <person name="Cordes M."/>
            <person name="Abu-Threideh J."/>
            <person name="Stoneking T."/>
            <person name="Kalicki J."/>
            <person name="Graves T."/>
            <person name="Harmon G."/>
            <person name="Edwards J."/>
            <person name="Latreille P."/>
            <person name="Courtney L."/>
            <person name="Cloud J."/>
            <person name="Abbott A."/>
            <person name="Scott K."/>
            <person name="Johnson D."/>
            <person name="Minx P."/>
            <person name="Bentley D."/>
            <person name="Fulton B."/>
            <person name="Miller N."/>
            <person name="Greco T."/>
            <person name="Kemp K."/>
            <person name="Kramer J."/>
            <person name="Fulton L."/>
            <person name="Mardis E."/>
            <person name="Dante M."/>
            <person name="Pepin K."/>
            <person name="Hillier L.W."/>
            <person name="Nelson J."/>
            <person name="Spieth J."/>
            <person name="Ryan E."/>
            <person name="Andrews S."/>
            <person name="Geisel C."/>
            <person name="Layman D."/>
            <person name="Du H."/>
            <person name="Ali J."/>
            <person name="Berghoff A."/>
            <person name="Jones K."/>
            <person name="Drone K."/>
            <person name="Cotton M."/>
            <person name="Joshu C."/>
            <person name="Antonoiu B."/>
            <person name="Zidanic M."/>
            <person name="Strong C."/>
            <person name="Sun H."/>
            <person name="Lamar B."/>
            <person name="Yordan C."/>
            <person name="Ma P."/>
            <person name="Zhong J."/>
            <person name="Preston R."/>
            <person name="Vil D."/>
            <person name="Shekher M."/>
            <person name="Matero A."/>
            <person name="Shah R."/>
            <person name="Swaby I.K."/>
            <person name="O'Shaughnessy A."/>
            <person name="Rodriguez M."/>
            <person name="Hoffman J."/>
            <person name="Till S."/>
            <person name="Granat S."/>
            <person name="Shohdy N."/>
            <person name="Hasegawa A."/>
            <person name="Hameed A."/>
            <person name="Lodhi M."/>
            <person name="Johnson A."/>
            <person name="Chen E."/>
            <person name="Marra M.A."/>
            <person name="Martienssen R."/>
            <person name="McCombie W.R."/>
        </authorList>
    </citation>
    <scope>NUCLEOTIDE SEQUENCE [LARGE SCALE GENOMIC DNA]</scope>
    <source>
        <strain>cv. Columbia</strain>
    </source>
</reference>
<reference key="3">
    <citation type="journal article" date="2017" name="Plant J.">
        <title>Araport11: a complete reannotation of the Arabidopsis thaliana reference genome.</title>
        <authorList>
            <person name="Cheng C.Y."/>
            <person name="Krishnakumar V."/>
            <person name="Chan A.P."/>
            <person name="Thibaud-Nissen F."/>
            <person name="Schobel S."/>
            <person name="Town C.D."/>
        </authorList>
    </citation>
    <scope>GENOME REANNOTATION</scope>
    <source>
        <strain>cv. Columbia</strain>
    </source>
</reference>
<reference key="4">
    <citation type="journal article" date="2003" name="Science">
        <title>Empirical analysis of transcriptional activity in the Arabidopsis genome.</title>
        <authorList>
            <person name="Yamada K."/>
            <person name="Lim J."/>
            <person name="Dale J.M."/>
            <person name="Chen H."/>
            <person name="Shinn P."/>
            <person name="Palm C.J."/>
            <person name="Southwick A.M."/>
            <person name="Wu H.C."/>
            <person name="Kim C.J."/>
            <person name="Nguyen M."/>
            <person name="Pham P.K."/>
            <person name="Cheuk R.F."/>
            <person name="Karlin-Newmann G."/>
            <person name="Liu S.X."/>
            <person name="Lam B."/>
            <person name="Sakano H."/>
            <person name="Wu T."/>
            <person name="Yu G."/>
            <person name="Miranda M."/>
            <person name="Quach H.L."/>
            <person name="Tripp M."/>
            <person name="Chang C.H."/>
            <person name="Lee J.M."/>
            <person name="Toriumi M.J."/>
            <person name="Chan M.M."/>
            <person name="Tang C.C."/>
            <person name="Onodera C.S."/>
            <person name="Deng J.M."/>
            <person name="Akiyama K."/>
            <person name="Ansari Y."/>
            <person name="Arakawa T."/>
            <person name="Banh J."/>
            <person name="Banno F."/>
            <person name="Bowser L."/>
            <person name="Brooks S.Y."/>
            <person name="Carninci P."/>
            <person name="Chao Q."/>
            <person name="Choy N."/>
            <person name="Enju A."/>
            <person name="Goldsmith A.D."/>
            <person name="Gurjal M."/>
            <person name="Hansen N.F."/>
            <person name="Hayashizaki Y."/>
            <person name="Johnson-Hopson C."/>
            <person name="Hsuan V.W."/>
            <person name="Iida K."/>
            <person name="Karnes M."/>
            <person name="Khan S."/>
            <person name="Koesema E."/>
            <person name="Ishida J."/>
            <person name="Jiang P.X."/>
            <person name="Jones T."/>
            <person name="Kawai J."/>
            <person name="Kamiya A."/>
            <person name="Meyers C."/>
            <person name="Nakajima M."/>
            <person name="Narusaka M."/>
            <person name="Seki M."/>
            <person name="Sakurai T."/>
            <person name="Satou M."/>
            <person name="Tamse R."/>
            <person name="Vaysberg M."/>
            <person name="Wallender E.K."/>
            <person name="Wong C."/>
            <person name="Yamamura Y."/>
            <person name="Yuan S."/>
            <person name="Shinozaki K."/>
            <person name="Davis R.W."/>
            <person name="Theologis A."/>
            <person name="Ecker J.R."/>
        </authorList>
    </citation>
    <scope>NUCLEOTIDE SEQUENCE [LARGE SCALE MRNA]</scope>
    <source>
        <strain>cv. Columbia</strain>
    </source>
</reference>
<reference key="5">
    <citation type="journal article" date="2008" name="PLoS ONE">
        <title>Sorting signals, N-terminal modifications and abundance of the chloroplast proteome.</title>
        <authorList>
            <person name="Zybailov B."/>
            <person name="Rutschow H."/>
            <person name="Friso G."/>
            <person name="Rudella A."/>
            <person name="Emanuelsson O."/>
            <person name="Sun Q."/>
            <person name="van Wijk K.J."/>
        </authorList>
    </citation>
    <scope>IDENTIFICATION BY MASS SPECTROMETRY</scope>
    <scope>SUBCELLULAR LOCATION [LARGE SCALE ANALYSIS]</scope>
</reference>
<reference key="6">
    <citation type="journal article" date="2009" name="Plant Mol. Biol.">
        <title>Arabidopsis thaliana encodes a bacterial-type heterodimeric isopropylmalate isomerase involved in both Leu biosynthesis and the Met chain elongation pathway of glucosinolate formation.</title>
        <authorList>
            <person name="Knill T."/>
            <person name="Reichelt M."/>
            <person name="Paetz C."/>
            <person name="Gershenzon J."/>
            <person name="Binder S."/>
        </authorList>
    </citation>
    <scope>FUNCTION</scope>
    <scope>CATALYTIC ACTIVITY</scope>
</reference>
<reference key="7">
    <citation type="journal article" date="2010" name="Plant Cell Physiol.">
        <title>Functional specification of Arabidopsis isopropylmalate isomerases in glucosinolate and leucine biosynthesis.</title>
        <authorList>
            <person name="He Y."/>
            <person name="Chen B."/>
            <person name="Pang Q."/>
            <person name="Strul J.M."/>
            <person name="Chen S."/>
        </authorList>
    </citation>
    <scope>FUNCTION</scope>
    <scope>SUBUNIT</scope>
    <scope>SUBCELLULAR LOCATION</scope>
    <scope>TISSUE SPECIFICITY</scope>
</reference>
<organism>
    <name type="scientific">Arabidopsis thaliana</name>
    <name type="common">Mouse-ear cress</name>
    <dbReference type="NCBI Taxonomy" id="3702"/>
    <lineage>
        <taxon>Eukaryota</taxon>
        <taxon>Viridiplantae</taxon>
        <taxon>Streptophyta</taxon>
        <taxon>Embryophyta</taxon>
        <taxon>Tracheophyta</taxon>
        <taxon>Spermatophyta</taxon>
        <taxon>Magnoliopsida</taxon>
        <taxon>eudicotyledons</taxon>
        <taxon>Gunneridae</taxon>
        <taxon>Pentapetalae</taxon>
        <taxon>rosids</taxon>
        <taxon>malvids</taxon>
        <taxon>Brassicales</taxon>
        <taxon>Brassicaceae</taxon>
        <taxon>Camelineae</taxon>
        <taxon>Arabidopsis</taxon>
    </lineage>
</organism>
<comment type="function">
    <text evidence="4 5 6">Catalyzes the isomerization between 2-isopropylmalate and 3-isopropylmalate, via the formation of 2-isopropylmaleate (PubMed:19150812, PubMed:20663849). Functions in both the biosynthesis of leucine and in the methionine chain elongation pathway of aliphatic glucosinolate formation (PubMed:19597944).</text>
</comment>
<comment type="catalytic activity">
    <reaction evidence="5">
        <text>(2R,3S)-3-isopropylmalate = (2S)-2-isopropylmalate</text>
        <dbReference type="Rhea" id="RHEA:32287"/>
        <dbReference type="ChEBI" id="CHEBI:1178"/>
        <dbReference type="ChEBI" id="CHEBI:35121"/>
        <dbReference type="EC" id="4.2.1.33"/>
    </reaction>
</comment>
<comment type="catalytic activity">
    <reaction evidence="5">
        <text>a 2-(omega-methylsulfanyl)alkylmalate = a 2-(omega-methylsulfanyl)alkylmaleate + H2O</text>
        <dbReference type="Rhea" id="RHEA:50632"/>
        <dbReference type="Rhea" id="RHEA-COMP:12824"/>
        <dbReference type="Rhea" id="RHEA-COMP:12826"/>
        <dbReference type="ChEBI" id="CHEBI:15377"/>
        <dbReference type="ChEBI" id="CHEBI:133494"/>
        <dbReference type="ChEBI" id="CHEBI:133498"/>
        <dbReference type="EC" id="4.2.1.170"/>
    </reaction>
</comment>
<comment type="catalytic activity">
    <reaction evidence="5">
        <text>2-(3-methylsulfanyl)propylmalate = 2-(2-methylsulfanyl)propylmaleate + H2O</text>
        <dbReference type="Rhea" id="RHEA:50652"/>
        <dbReference type="ChEBI" id="CHEBI:15377"/>
        <dbReference type="ChEBI" id="CHEBI:58817"/>
        <dbReference type="ChEBI" id="CHEBI:133500"/>
        <dbReference type="EC" id="4.2.1.170"/>
    </reaction>
</comment>
<comment type="catalytic activity">
    <reaction evidence="5">
        <text>a 3-(omega-methylsulfanyl)alkylmalate = a 2-(omega-methylsulfanyl)alkylmaleate + H2O</text>
        <dbReference type="Rhea" id="RHEA:50636"/>
        <dbReference type="Rhea" id="RHEA-COMP:12825"/>
        <dbReference type="Rhea" id="RHEA-COMP:12826"/>
        <dbReference type="ChEBI" id="CHEBI:15377"/>
        <dbReference type="ChEBI" id="CHEBI:133496"/>
        <dbReference type="ChEBI" id="CHEBI:133498"/>
        <dbReference type="EC" id="4.2.1.170"/>
    </reaction>
</comment>
<comment type="catalytic activity">
    <reaction evidence="5">
        <text>2-(2-methylsulfanyl)ethylmalate = 2-(2-methylsulfanyl)ethylmaleate + H2O</text>
        <dbReference type="Rhea" id="RHEA:50648"/>
        <dbReference type="ChEBI" id="CHEBI:15377"/>
        <dbReference type="ChEBI" id="CHEBI:58816"/>
        <dbReference type="ChEBI" id="CHEBI:133499"/>
        <dbReference type="EC" id="4.2.1.170"/>
    </reaction>
</comment>
<comment type="catalytic activity">
    <reaction evidence="5">
        <text>3-(2-methylsulfanyl)ethylmalate = 2-(2-methylsulfanyl)ethylmaleate + H2O</text>
        <dbReference type="Rhea" id="RHEA:50656"/>
        <dbReference type="ChEBI" id="CHEBI:15377"/>
        <dbReference type="ChEBI" id="CHEBI:133497"/>
        <dbReference type="ChEBI" id="CHEBI:133499"/>
        <dbReference type="EC" id="4.2.1.170"/>
    </reaction>
</comment>
<comment type="catalytic activity">
    <reaction evidence="5">
        <text>3-(3-methylsulfanyl)propylmalate = 2-(2-methylsulfanyl)propylmaleate + H2O</text>
        <dbReference type="Rhea" id="RHEA:50660"/>
        <dbReference type="ChEBI" id="CHEBI:15377"/>
        <dbReference type="ChEBI" id="CHEBI:133500"/>
        <dbReference type="ChEBI" id="CHEBI:133501"/>
        <dbReference type="EC" id="4.2.1.170"/>
    </reaction>
</comment>
<comment type="cofactor">
    <cofactor evidence="1">
        <name>[4Fe-4S] cluster</name>
        <dbReference type="ChEBI" id="CHEBI:49883"/>
    </cofactor>
    <text evidence="1">Binds 1 [4Fe-4S] cluster per subunit.</text>
</comment>
<comment type="pathway">
    <text evidence="10">Amino-acid biosynthesis; L-leucine biosynthesis; L-leucine from 3-methyl-2-oxobutanoate: step 2/4.</text>
</comment>
<comment type="subunit">
    <text evidence="6">Heterodimer of the large LEUC/IIL1 subunit and the small LEUD (SSU1, SSU2 or SSU3) subunits.</text>
</comment>
<comment type="subcellular location">
    <subcellularLocation>
        <location evidence="3 6">Plastid</location>
        <location evidence="3 6">Chloroplast stroma</location>
    </subcellularLocation>
</comment>
<comment type="tissue specificity">
    <text evidence="6">Expressed in roots, leaves, stems and flowers. Expressed at low levels in siliques.</text>
</comment>
<comment type="miscellaneous">
    <text evidence="11">The environment dependent reduction in IIL1 activity and severely impaired growth of cv. Bur-0 are caused by a triplet repeat expansion in the third intron of the gene (PubMed:19150812).</text>
</comment>
<comment type="similarity">
    <text evidence="10">Belongs to the aconitase/IPM isomerase family.</text>
</comment>
<comment type="sequence caution" evidence="10">
    <conflict type="erroneous gene model prediction">
        <sequence resource="EMBL-CDS" id="CAB40778"/>
    </conflict>
</comment>
<comment type="sequence caution" evidence="10">
    <conflict type="erroneous gene model prediction">
        <sequence resource="EMBL-CDS" id="CAB78385"/>
    </conflict>
</comment>
<dbReference type="EC" id="4.2.1.33" evidence="5"/>
<dbReference type="EC" id="4.2.1.170" evidence="5"/>
<dbReference type="EMBL" id="AL049608">
    <property type="protein sequence ID" value="CAB40778.1"/>
    <property type="status" value="ALT_SEQ"/>
    <property type="molecule type" value="Genomic_DNA"/>
</dbReference>
<dbReference type="EMBL" id="AL161536">
    <property type="protein sequence ID" value="CAB78385.1"/>
    <property type="status" value="ALT_SEQ"/>
    <property type="molecule type" value="Genomic_DNA"/>
</dbReference>
<dbReference type="EMBL" id="CP002687">
    <property type="protein sequence ID" value="AEE83278.1"/>
    <property type="molecule type" value="Genomic_DNA"/>
</dbReference>
<dbReference type="EMBL" id="AY045842">
    <property type="protein sequence ID" value="AAK76516.1"/>
    <property type="molecule type" value="mRNA"/>
</dbReference>
<dbReference type="EMBL" id="AY117151">
    <property type="protein sequence ID" value="AAM51226.1"/>
    <property type="molecule type" value="mRNA"/>
</dbReference>
<dbReference type="PIR" id="T06300">
    <property type="entry name" value="T06300"/>
</dbReference>
<dbReference type="RefSeq" id="NP_567405.1">
    <property type="nucleotide sequence ID" value="NM_117417.4"/>
</dbReference>
<dbReference type="SMR" id="Q94AR8"/>
<dbReference type="BioGRID" id="12272">
    <property type="interactions" value="8"/>
</dbReference>
<dbReference type="FunCoup" id="Q94AR8">
    <property type="interactions" value="945"/>
</dbReference>
<dbReference type="STRING" id="3702.Q94AR8"/>
<dbReference type="iPTMnet" id="Q94AR8"/>
<dbReference type="PaxDb" id="3702-AT4G13430.1"/>
<dbReference type="ProteomicsDB" id="250756"/>
<dbReference type="EnsemblPlants" id="AT4G13430.1">
    <property type="protein sequence ID" value="AT4G13430.1"/>
    <property type="gene ID" value="AT4G13430"/>
</dbReference>
<dbReference type="GeneID" id="826975"/>
<dbReference type="Gramene" id="AT4G13430.1">
    <property type="protein sequence ID" value="AT4G13430.1"/>
    <property type="gene ID" value="AT4G13430"/>
</dbReference>
<dbReference type="KEGG" id="ath:AT4G13430"/>
<dbReference type="Araport" id="AT4G13430"/>
<dbReference type="TAIR" id="AT4G13430">
    <property type="gene designation" value="IIL1"/>
</dbReference>
<dbReference type="eggNOG" id="KOG0454">
    <property type="taxonomic scope" value="Eukaryota"/>
</dbReference>
<dbReference type="HOGENOM" id="CLU_006714_3_4_1"/>
<dbReference type="InParanoid" id="Q94AR8"/>
<dbReference type="OMA" id="WDDHVVR"/>
<dbReference type="PhylomeDB" id="Q94AR8"/>
<dbReference type="BioCyc" id="ARA:AT4G13430-MONOMER"/>
<dbReference type="BioCyc" id="MetaCyc:AT4G13430-MONOMER"/>
<dbReference type="BRENDA" id="4.2.1.170">
    <property type="organism ID" value="399"/>
</dbReference>
<dbReference type="BRENDA" id="4.2.1.33">
    <property type="organism ID" value="399"/>
</dbReference>
<dbReference type="UniPathway" id="UPA00048">
    <property type="reaction ID" value="UER00071"/>
</dbReference>
<dbReference type="CD-CODE" id="4299E36E">
    <property type="entry name" value="Nucleolus"/>
</dbReference>
<dbReference type="PRO" id="PR:Q94AR8"/>
<dbReference type="Proteomes" id="UP000006548">
    <property type="component" value="Chromosome 4"/>
</dbReference>
<dbReference type="ExpressionAtlas" id="Q94AR8">
    <property type="expression patterns" value="baseline and differential"/>
</dbReference>
<dbReference type="GO" id="GO:0009507">
    <property type="term" value="C:chloroplast"/>
    <property type="evidence" value="ECO:0007005"/>
    <property type="project" value="TAIR"/>
</dbReference>
<dbReference type="GO" id="GO:0009570">
    <property type="term" value="C:chloroplast stroma"/>
    <property type="evidence" value="ECO:0007005"/>
    <property type="project" value="TAIR"/>
</dbReference>
<dbReference type="GO" id="GO:0009536">
    <property type="term" value="C:plastid"/>
    <property type="evidence" value="ECO:0007005"/>
    <property type="project" value="TAIR"/>
</dbReference>
<dbReference type="GO" id="GO:0120528">
    <property type="term" value="F:2-(omega-methylthio)alkylmalate dehydratase activity"/>
    <property type="evidence" value="ECO:0007669"/>
    <property type="project" value="UniProtKB-EC"/>
</dbReference>
<dbReference type="GO" id="GO:0003861">
    <property type="term" value="F:3-isopropylmalate dehydratase activity"/>
    <property type="evidence" value="ECO:0007669"/>
    <property type="project" value="UniProtKB-EC"/>
</dbReference>
<dbReference type="GO" id="GO:0051539">
    <property type="term" value="F:4 iron, 4 sulfur cluster binding"/>
    <property type="evidence" value="ECO:0007669"/>
    <property type="project" value="UniProtKB-KW"/>
</dbReference>
<dbReference type="GO" id="GO:0050486">
    <property type="term" value="F:intramolecular hydroxytransferase activity"/>
    <property type="evidence" value="ECO:0000315"/>
    <property type="project" value="TAIR"/>
</dbReference>
<dbReference type="GO" id="GO:0046872">
    <property type="term" value="F:metal ion binding"/>
    <property type="evidence" value="ECO:0007669"/>
    <property type="project" value="UniProtKB-KW"/>
</dbReference>
<dbReference type="GO" id="GO:0019761">
    <property type="term" value="P:glucosinolate biosynthetic process"/>
    <property type="evidence" value="ECO:0000315"/>
    <property type="project" value="TAIR"/>
</dbReference>
<dbReference type="GO" id="GO:0009098">
    <property type="term" value="P:L-leucine biosynthetic process"/>
    <property type="evidence" value="ECO:0007669"/>
    <property type="project" value="UniProtKB-UniPathway"/>
</dbReference>
<dbReference type="CDD" id="cd01583">
    <property type="entry name" value="IPMI"/>
    <property type="match status" value="1"/>
</dbReference>
<dbReference type="FunFam" id="3.30.499.10:FF:000010">
    <property type="entry name" value="3-isopropylmalate dehydratase large subunit, chloroplastic-like"/>
    <property type="match status" value="1"/>
</dbReference>
<dbReference type="FunFam" id="3.30.499.10:FF:000021">
    <property type="entry name" value="BnaC08g47120D protein"/>
    <property type="match status" value="1"/>
</dbReference>
<dbReference type="Gene3D" id="3.30.499.10">
    <property type="entry name" value="Aconitase, domain 3"/>
    <property type="match status" value="2"/>
</dbReference>
<dbReference type="InterPro" id="IPR015931">
    <property type="entry name" value="Acnase/IPM_dHydase_lsu_aba_1/3"/>
</dbReference>
<dbReference type="InterPro" id="IPR001030">
    <property type="entry name" value="Acoase/IPM_deHydtase_lsu_aba"/>
</dbReference>
<dbReference type="InterPro" id="IPR036008">
    <property type="entry name" value="Aconitase_4Fe-4S_dom"/>
</dbReference>
<dbReference type="InterPro" id="IPR006251">
    <property type="entry name" value="Homoacnase/IPMdehydase_lsu"/>
</dbReference>
<dbReference type="InterPro" id="IPR050067">
    <property type="entry name" value="IPM_dehydratase_rel_enz"/>
</dbReference>
<dbReference type="InterPro" id="IPR033941">
    <property type="entry name" value="IPMI_cat"/>
</dbReference>
<dbReference type="NCBIfam" id="TIGR01343">
    <property type="entry name" value="hacA_fam"/>
    <property type="match status" value="1"/>
</dbReference>
<dbReference type="NCBIfam" id="NF001614">
    <property type="entry name" value="PRK00402.1"/>
    <property type="match status" value="1"/>
</dbReference>
<dbReference type="PANTHER" id="PTHR43822:SF2">
    <property type="entry name" value="HOMOACONITASE, MITOCHONDRIAL"/>
    <property type="match status" value="1"/>
</dbReference>
<dbReference type="PANTHER" id="PTHR43822">
    <property type="entry name" value="HOMOACONITASE, MITOCHONDRIAL-RELATED"/>
    <property type="match status" value="1"/>
</dbReference>
<dbReference type="Pfam" id="PF00330">
    <property type="entry name" value="Aconitase"/>
    <property type="match status" value="2"/>
</dbReference>
<dbReference type="PRINTS" id="PR00415">
    <property type="entry name" value="ACONITASE"/>
</dbReference>
<dbReference type="SUPFAM" id="SSF53732">
    <property type="entry name" value="Aconitase iron-sulfur domain"/>
    <property type="match status" value="1"/>
</dbReference>
<protein>
    <recommendedName>
        <fullName evidence="10">3-isopropylmalate dehydratase large subunit, chloroplastic</fullName>
        <ecNumber evidence="5">4.2.1.33</ecNumber>
    </recommendedName>
    <alternativeName>
        <fullName evidence="10">2-(omega-methylthio)alkylmalate dehydratase large subunit</fullName>
        <ecNumber evidence="5">4.2.1.170</ecNumber>
    </alternativeName>
    <alternativeName>
        <fullName evidence="9">AtLEUC</fullName>
    </alternativeName>
    <alternativeName>
        <fullName evidence="7 8">Isopropylmalate isomerase large subunit 1</fullName>
        <shortName evidence="7">AtIIL1</shortName>
        <shortName evidence="8">IPMI LSU1</shortName>
    </alternativeName>
    <alternativeName>
        <fullName evidence="10">Methylthioalkylmalate isomerase large subunit</fullName>
        <shortName evidence="10">MAM-IL</shortName>
    </alternativeName>
</protein>
<sequence>MASVISSSPFLCKSSSKSDLGISSFPKSSQISIHRCQKKSISRKIVSVMAPQKDRSPGTTGSVKTGMTMTEKILARASEKSLVVPGDNIWVNVDVLMTHDVCGPGAFGIFKREFGEKAKVWDPEKIVVIPDHYIFTADKRANRNVDIMREHCREQNIKYFYDITDLGNFKANPDYKGVCHVALAQEGHCRPGEVLLGTDSHTCTAGAFGQFATGIGNTDAGFVLGTGKILLKVPPTMRFILDGEMPSYLQAKDLILQIIGEISVAGATYKTMEFSGTTIESLSMEERMTLCNMVVEAGGKNGVIPPDATTLNYVENRTSVPFEPVYSDGNASFVADYRFDVSKLEPVVAKPHSPDNRALARECKDVKIDRVYIGSCTGGKTEDFMAAAKLFHAAGRKVKVPTFLVPATQKVWMDVYALPVPGAGGKTCAQIFEEAGCDTPASPSCGACLGGPADTYARLNEPQVCVSTTNRNFPGRMGHKEGQIYLASPYTAAASALTGRVADPREFLQ</sequence>
<proteinExistence type="evidence at protein level"/>
<evidence type="ECO:0000250" key="1">
    <source>
        <dbReference type="UniProtKB" id="P16276"/>
    </source>
</evidence>
<evidence type="ECO:0000256" key="2">
    <source>
        <dbReference type="SAM" id="MobiDB-lite"/>
    </source>
</evidence>
<evidence type="ECO:0000269" key="3">
    <source>
    </source>
</evidence>
<evidence type="ECO:0000269" key="4">
    <source>
    </source>
</evidence>
<evidence type="ECO:0000269" key="5">
    <source>
    </source>
</evidence>
<evidence type="ECO:0000269" key="6">
    <source>
    </source>
</evidence>
<evidence type="ECO:0000303" key="7">
    <source>
    </source>
</evidence>
<evidence type="ECO:0000303" key="8">
    <source>
    </source>
</evidence>
<evidence type="ECO:0000303" key="9">
    <source>
    </source>
</evidence>
<evidence type="ECO:0000305" key="10"/>
<evidence type="ECO:0000305" key="11">
    <source>
    </source>
</evidence>
<evidence type="ECO:0000312" key="12">
    <source>
        <dbReference type="Araport" id="AT4G13430"/>
    </source>
</evidence>
<evidence type="ECO:0000312" key="13">
    <source>
        <dbReference type="EMBL" id="CAB40778.1"/>
    </source>
</evidence>
<keyword id="KW-0004">4Fe-4S</keyword>
<keyword id="KW-0028">Amino-acid biosynthesis</keyword>
<keyword id="KW-0100">Branched-chain amino acid biosynthesis</keyword>
<keyword id="KW-0150">Chloroplast</keyword>
<keyword id="KW-0408">Iron</keyword>
<keyword id="KW-0411">Iron-sulfur</keyword>
<keyword id="KW-0432">Leucine biosynthesis</keyword>
<keyword id="KW-0456">Lyase</keyword>
<keyword id="KW-0479">Metal-binding</keyword>
<keyword id="KW-0934">Plastid</keyword>
<keyword id="KW-1185">Reference proteome</keyword>
<keyword id="KW-0809">Transit peptide</keyword>
<gene>
    <name evidence="7" type="primary">IIL1</name>
    <name evidence="12" type="ordered locus">At4g13430</name>
    <name evidence="13" type="ORF">T9E8.170</name>
</gene>
<feature type="transit peptide" description="Chloroplast" evidence="10">
    <location>
        <begin position="1"/>
        <end position="47"/>
    </location>
</feature>
<feature type="chain" id="PRO_0000366939" description="3-isopropylmalate dehydratase large subunit, chloroplastic">
    <location>
        <begin position="48"/>
        <end position="509"/>
    </location>
</feature>
<feature type="region of interest" description="Disordered" evidence="2">
    <location>
        <begin position="1"/>
        <end position="25"/>
    </location>
</feature>
<feature type="compositionally biased region" description="Low complexity" evidence="2">
    <location>
        <begin position="1"/>
        <end position="24"/>
    </location>
</feature>
<feature type="binding site" evidence="1">
    <location>
        <position position="376"/>
    </location>
    <ligand>
        <name>[4Fe-4S] cluster</name>
        <dbReference type="ChEBI" id="CHEBI:49883"/>
    </ligand>
</feature>
<feature type="binding site" evidence="1">
    <location>
        <position position="445"/>
    </location>
    <ligand>
        <name>[4Fe-4S] cluster</name>
        <dbReference type="ChEBI" id="CHEBI:49883"/>
    </ligand>
</feature>
<feature type="binding site" evidence="1">
    <location>
        <position position="448"/>
    </location>
    <ligand>
        <name>[4Fe-4S] cluster</name>
        <dbReference type="ChEBI" id="CHEBI:49883"/>
    </ligand>
</feature>